<name>TRMB_MYXXD</name>
<dbReference type="EC" id="2.1.1.33" evidence="2"/>
<dbReference type="EMBL" id="CP000113">
    <property type="protein sequence ID" value="ABF88297.1"/>
    <property type="molecule type" value="Genomic_DNA"/>
</dbReference>
<dbReference type="RefSeq" id="WP_011555741.1">
    <property type="nucleotide sequence ID" value="NC_008095.1"/>
</dbReference>
<dbReference type="SMR" id="Q1D096"/>
<dbReference type="STRING" id="246197.MXAN_5790"/>
<dbReference type="EnsemblBacteria" id="ABF88297">
    <property type="protein sequence ID" value="ABF88297"/>
    <property type="gene ID" value="MXAN_5790"/>
</dbReference>
<dbReference type="GeneID" id="41363033"/>
<dbReference type="KEGG" id="mxa:MXAN_5790"/>
<dbReference type="eggNOG" id="COG0220">
    <property type="taxonomic scope" value="Bacteria"/>
</dbReference>
<dbReference type="HOGENOM" id="CLU_050910_2_0_7"/>
<dbReference type="OrthoDB" id="9802090at2"/>
<dbReference type="UniPathway" id="UPA00989"/>
<dbReference type="Proteomes" id="UP000002402">
    <property type="component" value="Chromosome"/>
</dbReference>
<dbReference type="GO" id="GO:0043527">
    <property type="term" value="C:tRNA methyltransferase complex"/>
    <property type="evidence" value="ECO:0007669"/>
    <property type="project" value="TreeGrafter"/>
</dbReference>
<dbReference type="GO" id="GO:0008176">
    <property type="term" value="F:tRNA (guanine(46)-N7)-methyltransferase activity"/>
    <property type="evidence" value="ECO:0007669"/>
    <property type="project" value="UniProtKB-UniRule"/>
</dbReference>
<dbReference type="CDD" id="cd02440">
    <property type="entry name" value="AdoMet_MTases"/>
    <property type="match status" value="1"/>
</dbReference>
<dbReference type="Gene3D" id="3.40.50.150">
    <property type="entry name" value="Vaccinia Virus protein VP39"/>
    <property type="match status" value="1"/>
</dbReference>
<dbReference type="HAMAP" id="MF_01057">
    <property type="entry name" value="tRNA_methyltr_TrmB"/>
    <property type="match status" value="1"/>
</dbReference>
<dbReference type="InterPro" id="IPR029063">
    <property type="entry name" value="SAM-dependent_MTases_sf"/>
</dbReference>
<dbReference type="InterPro" id="IPR003358">
    <property type="entry name" value="tRNA_(Gua-N-7)_MeTrfase_Trmb"/>
</dbReference>
<dbReference type="InterPro" id="IPR055361">
    <property type="entry name" value="tRNA_methyltr_TrmB_bact"/>
</dbReference>
<dbReference type="PANTHER" id="PTHR23417">
    <property type="entry name" value="3-DEOXY-D-MANNO-OCTULOSONIC-ACID TRANSFERASE/TRNA GUANINE-N 7 - -METHYLTRANSFERASE"/>
    <property type="match status" value="1"/>
</dbReference>
<dbReference type="PANTHER" id="PTHR23417:SF14">
    <property type="entry name" value="PENTACOTRIPEPTIDE-REPEAT REGION OF PRORP DOMAIN-CONTAINING PROTEIN"/>
    <property type="match status" value="1"/>
</dbReference>
<dbReference type="Pfam" id="PF02390">
    <property type="entry name" value="Methyltransf_4"/>
    <property type="match status" value="1"/>
</dbReference>
<dbReference type="SUPFAM" id="SSF53335">
    <property type="entry name" value="S-adenosyl-L-methionine-dependent methyltransferases"/>
    <property type="match status" value="1"/>
</dbReference>
<dbReference type="PROSITE" id="PS51625">
    <property type="entry name" value="SAM_MT_TRMB"/>
    <property type="match status" value="1"/>
</dbReference>
<feature type="chain" id="PRO_0000288186" description="tRNA (guanine-N(7)-)-methyltransferase">
    <location>
        <begin position="1"/>
        <end position="206"/>
    </location>
</feature>
<feature type="active site" evidence="1">
    <location>
        <position position="112"/>
    </location>
</feature>
<feature type="binding site" evidence="2">
    <location>
        <position position="37"/>
    </location>
    <ligand>
        <name>S-adenosyl-L-methionine</name>
        <dbReference type="ChEBI" id="CHEBI:59789"/>
    </ligand>
</feature>
<feature type="binding site" evidence="2">
    <location>
        <position position="62"/>
    </location>
    <ligand>
        <name>S-adenosyl-L-methionine</name>
        <dbReference type="ChEBI" id="CHEBI:59789"/>
    </ligand>
</feature>
<feature type="binding site" evidence="2">
    <location>
        <position position="89"/>
    </location>
    <ligand>
        <name>S-adenosyl-L-methionine</name>
        <dbReference type="ChEBI" id="CHEBI:59789"/>
    </ligand>
</feature>
<feature type="binding site" evidence="2">
    <location>
        <position position="112"/>
    </location>
    <ligand>
        <name>S-adenosyl-L-methionine</name>
        <dbReference type="ChEBI" id="CHEBI:59789"/>
    </ligand>
</feature>
<feature type="binding site" evidence="2">
    <location>
        <position position="116"/>
    </location>
    <ligand>
        <name>substrate</name>
    </ligand>
</feature>
<feature type="binding site" evidence="2">
    <location>
        <position position="148"/>
    </location>
    <ligand>
        <name>substrate</name>
    </ligand>
</feature>
<proteinExistence type="inferred from homology"/>
<comment type="function">
    <text evidence="2">Catalyzes the formation of N(7)-methylguanine at position 46 (m7G46) in tRNA.</text>
</comment>
<comment type="catalytic activity">
    <reaction evidence="2">
        <text>guanosine(46) in tRNA + S-adenosyl-L-methionine = N(7)-methylguanosine(46) in tRNA + S-adenosyl-L-homocysteine</text>
        <dbReference type="Rhea" id="RHEA:42708"/>
        <dbReference type="Rhea" id="RHEA-COMP:10188"/>
        <dbReference type="Rhea" id="RHEA-COMP:10189"/>
        <dbReference type="ChEBI" id="CHEBI:57856"/>
        <dbReference type="ChEBI" id="CHEBI:59789"/>
        <dbReference type="ChEBI" id="CHEBI:74269"/>
        <dbReference type="ChEBI" id="CHEBI:74480"/>
        <dbReference type="EC" id="2.1.1.33"/>
    </reaction>
</comment>
<comment type="pathway">
    <text evidence="2">tRNA modification; N(7)-methylguanine-tRNA biosynthesis.</text>
</comment>
<comment type="similarity">
    <text evidence="2">Belongs to the class I-like SAM-binding methyltransferase superfamily. TrmB family.</text>
</comment>
<accession>Q1D096</accession>
<sequence length="206" mass="23312">MSRPRLLPEPVGLKFVTQETPPDWDAEFGFSGPLELEIGSGAGGHALEYCRRHPEVRFVAFEWRKKYARDTQDRADKAGLRNLRVIESDARFIVPRIFAPDSLAAIHLQFPDPWWKRSHAKRAVIQPAFAELLYGKLAPGGLFDMRTDVQDRGVTMLAILESVGFKNPLGSGVFHPYDPEEVPSTRERRYLASGEPVYRARLLKPA</sequence>
<evidence type="ECO:0000250" key="1"/>
<evidence type="ECO:0000255" key="2">
    <source>
        <dbReference type="HAMAP-Rule" id="MF_01057"/>
    </source>
</evidence>
<organism>
    <name type="scientific">Myxococcus xanthus (strain DK1622)</name>
    <dbReference type="NCBI Taxonomy" id="246197"/>
    <lineage>
        <taxon>Bacteria</taxon>
        <taxon>Pseudomonadati</taxon>
        <taxon>Myxococcota</taxon>
        <taxon>Myxococcia</taxon>
        <taxon>Myxococcales</taxon>
        <taxon>Cystobacterineae</taxon>
        <taxon>Myxococcaceae</taxon>
        <taxon>Myxococcus</taxon>
    </lineage>
</organism>
<keyword id="KW-0489">Methyltransferase</keyword>
<keyword id="KW-1185">Reference proteome</keyword>
<keyword id="KW-0949">S-adenosyl-L-methionine</keyword>
<keyword id="KW-0808">Transferase</keyword>
<keyword id="KW-0819">tRNA processing</keyword>
<gene>
    <name evidence="2" type="primary">trmB</name>
    <name type="ordered locus">MXAN_5790</name>
</gene>
<protein>
    <recommendedName>
        <fullName evidence="2">tRNA (guanine-N(7)-)-methyltransferase</fullName>
        <ecNumber evidence="2">2.1.1.33</ecNumber>
    </recommendedName>
    <alternativeName>
        <fullName evidence="2">tRNA (guanine(46)-N(7))-methyltransferase</fullName>
    </alternativeName>
    <alternativeName>
        <fullName evidence="2">tRNA(m7G46)-methyltransferase</fullName>
    </alternativeName>
</protein>
<reference key="1">
    <citation type="journal article" date="2006" name="Proc. Natl. Acad. Sci. U.S.A.">
        <title>Evolution of sensory complexity recorded in a myxobacterial genome.</title>
        <authorList>
            <person name="Goldman B.S."/>
            <person name="Nierman W.C."/>
            <person name="Kaiser D."/>
            <person name="Slater S.C."/>
            <person name="Durkin A.S."/>
            <person name="Eisen J.A."/>
            <person name="Ronning C.M."/>
            <person name="Barbazuk W.B."/>
            <person name="Blanchard M."/>
            <person name="Field C."/>
            <person name="Halling C."/>
            <person name="Hinkle G."/>
            <person name="Iartchuk O."/>
            <person name="Kim H.S."/>
            <person name="Mackenzie C."/>
            <person name="Madupu R."/>
            <person name="Miller N."/>
            <person name="Shvartsbeyn A."/>
            <person name="Sullivan S.A."/>
            <person name="Vaudin M."/>
            <person name="Wiegand R."/>
            <person name="Kaplan H.B."/>
        </authorList>
    </citation>
    <scope>NUCLEOTIDE SEQUENCE [LARGE SCALE GENOMIC DNA]</scope>
    <source>
        <strain>DK1622</strain>
    </source>
</reference>